<dbReference type="EC" id="2.5.1.141" evidence="1"/>
<dbReference type="EMBL" id="BX640422">
    <property type="protein sequence ID" value="CAE43992.1"/>
    <property type="molecule type" value="Genomic_DNA"/>
</dbReference>
<dbReference type="RefSeq" id="NP_882238.1">
    <property type="nucleotide sequence ID" value="NC_002929.2"/>
</dbReference>
<dbReference type="SMR" id="Q7VT22"/>
<dbReference type="STRING" id="257313.BP3735"/>
<dbReference type="PaxDb" id="257313-BP3735"/>
<dbReference type="KEGG" id="bpe:BP3735"/>
<dbReference type="PATRIC" id="fig|257313.5.peg.4038"/>
<dbReference type="eggNOG" id="COG0109">
    <property type="taxonomic scope" value="Bacteria"/>
</dbReference>
<dbReference type="HOGENOM" id="CLU_029631_0_2_4"/>
<dbReference type="UniPathway" id="UPA00834">
    <property type="reaction ID" value="UER00712"/>
</dbReference>
<dbReference type="Proteomes" id="UP000002676">
    <property type="component" value="Chromosome"/>
</dbReference>
<dbReference type="GO" id="GO:0005886">
    <property type="term" value="C:plasma membrane"/>
    <property type="evidence" value="ECO:0007669"/>
    <property type="project" value="UniProtKB-SubCell"/>
</dbReference>
<dbReference type="GO" id="GO:0008495">
    <property type="term" value="F:protoheme IX farnesyltransferase activity"/>
    <property type="evidence" value="ECO:0007669"/>
    <property type="project" value="UniProtKB-UniRule"/>
</dbReference>
<dbReference type="GO" id="GO:0048034">
    <property type="term" value="P:heme O biosynthetic process"/>
    <property type="evidence" value="ECO:0007669"/>
    <property type="project" value="UniProtKB-UniRule"/>
</dbReference>
<dbReference type="CDD" id="cd13957">
    <property type="entry name" value="PT_UbiA_Cox10"/>
    <property type="match status" value="1"/>
</dbReference>
<dbReference type="Gene3D" id="1.10.357.140">
    <property type="entry name" value="UbiA prenyltransferase"/>
    <property type="match status" value="1"/>
</dbReference>
<dbReference type="HAMAP" id="MF_00154">
    <property type="entry name" value="CyoE_CtaB"/>
    <property type="match status" value="1"/>
</dbReference>
<dbReference type="InterPro" id="IPR006369">
    <property type="entry name" value="Protohaem_IX_farnesylTrfase"/>
</dbReference>
<dbReference type="InterPro" id="IPR000537">
    <property type="entry name" value="UbiA_prenyltransferase"/>
</dbReference>
<dbReference type="InterPro" id="IPR044878">
    <property type="entry name" value="UbiA_sf"/>
</dbReference>
<dbReference type="NCBIfam" id="TIGR01473">
    <property type="entry name" value="cyoE_ctaB"/>
    <property type="match status" value="1"/>
</dbReference>
<dbReference type="NCBIfam" id="NF003349">
    <property type="entry name" value="PRK04375.1-2"/>
    <property type="match status" value="1"/>
</dbReference>
<dbReference type="PANTHER" id="PTHR43448:SF7">
    <property type="entry name" value="4-HYDROXYBENZOATE SOLANESYLTRANSFERASE"/>
    <property type="match status" value="1"/>
</dbReference>
<dbReference type="PANTHER" id="PTHR43448">
    <property type="entry name" value="PROTOHEME IX FARNESYLTRANSFERASE, MITOCHONDRIAL"/>
    <property type="match status" value="1"/>
</dbReference>
<dbReference type="Pfam" id="PF01040">
    <property type="entry name" value="UbiA"/>
    <property type="match status" value="1"/>
</dbReference>
<sequence length="297" mass="32729">MSSLAAPQTGLLRQYLVLTKPRVTQLAVFCAVIGMFLAAPGMPDLSHVVFGTLGIWLLAAAAFAINCLIEQEVDARMLRTARRATARGTISDIQVLSLSGLLGGAGMLVLYHLVNPLTMWLTFATFVGYAIIYTVILKPRTPQNIVIGGLSGAMPPALGWAAVADSVPAEAWVLVLIIFIWTPPHFWALALYRNNDYIKAGLPMLPVTRGQQFTRLHILLYSFALLATTLLPYAIRMSGALYLASALALGGMFVWYAWRLYREYSDALARRLFRFSILYLALLFGALLIDHWVGLLR</sequence>
<protein>
    <recommendedName>
        <fullName evidence="1">Protoheme IX farnesyltransferase</fullName>
        <ecNumber evidence="1">2.5.1.141</ecNumber>
    </recommendedName>
    <alternativeName>
        <fullName evidence="1">Heme B farnesyltransferase</fullName>
    </alternativeName>
    <alternativeName>
        <fullName evidence="1">Heme O synthase</fullName>
    </alternativeName>
</protein>
<keyword id="KW-0997">Cell inner membrane</keyword>
<keyword id="KW-1003">Cell membrane</keyword>
<keyword id="KW-0350">Heme biosynthesis</keyword>
<keyword id="KW-0472">Membrane</keyword>
<keyword id="KW-1185">Reference proteome</keyword>
<keyword id="KW-0808">Transferase</keyword>
<keyword id="KW-0812">Transmembrane</keyword>
<keyword id="KW-1133">Transmembrane helix</keyword>
<comment type="function">
    <text evidence="1">Converts heme B (protoheme IX) to heme O by substitution of the vinyl group on carbon 2 of heme B porphyrin ring with a hydroxyethyl farnesyl side group.</text>
</comment>
<comment type="catalytic activity">
    <reaction evidence="1">
        <text>heme b + (2E,6E)-farnesyl diphosphate + H2O = Fe(II)-heme o + diphosphate</text>
        <dbReference type="Rhea" id="RHEA:28070"/>
        <dbReference type="ChEBI" id="CHEBI:15377"/>
        <dbReference type="ChEBI" id="CHEBI:33019"/>
        <dbReference type="ChEBI" id="CHEBI:60344"/>
        <dbReference type="ChEBI" id="CHEBI:60530"/>
        <dbReference type="ChEBI" id="CHEBI:175763"/>
        <dbReference type="EC" id="2.5.1.141"/>
    </reaction>
</comment>
<comment type="pathway">
    <text evidence="1">Porphyrin-containing compound metabolism; heme O biosynthesis; heme O from protoheme: step 1/1.</text>
</comment>
<comment type="subcellular location">
    <subcellularLocation>
        <location evidence="1">Cell inner membrane</location>
        <topology evidence="1">Multi-pass membrane protein</topology>
    </subcellularLocation>
</comment>
<comment type="miscellaneous">
    <text evidence="1">Carbon 2 of the heme B porphyrin ring is defined according to the Fischer nomenclature.</text>
</comment>
<comment type="similarity">
    <text evidence="1">Belongs to the UbiA prenyltransferase family. Protoheme IX farnesyltransferase subfamily.</text>
</comment>
<accession>Q7VT22</accession>
<proteinExistence type="inferred from homology"/>
<organism>
    <name type="scientific">Bordetella pertussis (strain Tohama I / ATCC BAA-589 / NCTC 13251)</name>
    <dbReference type="NCBI Taxonomy" id="257313"/>
    <lineage>
        <taxon>Bacteria</taxon>
        <taxon>Pseudomonadati</taxon>
        <taxon>Pseudomonadota</taxon>
        <taxon>Betaproteobacteria</taxon>
        <taxon>Burkholderiales</taxon>
        <taxon>Alcaligenaceae</taxon>
        <taxon>Bordetella</taxon>
    </lineage>
</organism>
<reference key="1">
    <citation type="journal article" date="2003" name="Nat. Genet.">
        <title>Comparative analysis of the genome sequences of Bordetella pertussis, Bordetella parapertussis and Bordetella bronchiseptica.</title>
        <authorList>
            <person name="Parkhill J."/>
            <person name="Sebaihia M."/>
            <person name="Preston A."/>
            <person name="Murphy L.D."/>
            <person name="Thomson N.R."/>
            <person name="Harris D.E."/>
            <person name="Holden M.T.G."/>
            <person name="Churcher C.M."/>
            <person name="Bentley S.D."/>
            <person name="Mungall K.L."/>
            <person name="Cerdeno-Tarraga A.-M."/>
            <person name="Temple L."/>
            <person name="James K.D."/>
            <person name="Harris B."/>
            <person name="Quail M.A."/>
            <person name="Achtman M."/>
            <person name="Atkin R."/>
            <person name="Baker S."/>
            <person name="Basham D."/>
            <person name="Bason N."/>
            <person name="Cherevach I."/>
            <person name="Chillingworth T."/>
            <person name="Collins M."/>
            <person name="Cronin A."/>
            <person name="Davis P."/>
            <person name="Doggett J."/>
            <person name="Feltwell T."/>
            <person name="Goble A."/>
            <person name="Hamlin N."/>
            <person name="Hauser H."/>
            <person name="Holroyd S."/>
            <person name="Jagels K."/>
            <person name="Leather S."/>
            <person name="Moule S."/>
            <person name="Norberczak H."/>
            <person name="O'Neil S."/>
            <person name="Ormond D."/>
            <person name="Price C."/>
            <person name="Rabbinowitsch E."/>
            <person name="Rutter S."/>
            <person name="Sanders M."/>
            <person name="Saunders D."/>
            <person name="Seeger K."/>
            <person name="Sharp S."/>
            <person name="Simmonds M."/>
            <person name="Skelton J."/>
            <person name="Squares R."/>
            <person name="Squares S."/>
            <person name="Stevens K."/>
            <person name="Unwin L."/>
            <person name="Whitehead S."/>
            <person name="Barrell B.G."/>
            <person name="Maskell D.J."/>
        </authorList>
    </citation>
    <scope>NUCLEOTIDE SEQUENCE [LARGE SCALE GENOMIC DNA]</scope>
    <source>
        <strain>Tohama I / ATCC BAA-589 / NCTC 13251</strain>
    </source>
</reference>
<feature type="chain" id="PRO_0000327016" description="Protoheme IX farnesyltransferase">
    <location>
        <begin position="1"/>
        <end position="297"/>
    </location>
</feature>
<feature type="transmembrane region" description="Helical" evidence="1">
    <location>
        <begin position="23"/>
        <end position="43"/>
    </location>
</feature>
<feature type="transmembrane region" description="Helical" evidence="1">
    <location>
        <begin position="49"/>
        <end position="69"/>
    </location>
</feature>
<feature type="transmembrane region" description="Helical" evidence="1">
    <location>
        <begin position="93"/>
        <end position="113"/>
    </location>
</feature>
<feature type="transmembrane region" description="Helical" evidence="1">
    <location>
        <begin position="117"/>
        <end position="137"/>
    </location>
</feature>
<feature type="transmembrane region" description="Helical" evidence="1">
    <location>
        <begin position="144"/>
        <end position="164"/>
    </location>
</feature>
<feature type="transmembrane region" description="Helical" evidence="1">
    <location>
        <begin position="171"/>
        <end position="191"/>
    </location>
</feature>
<feature type="transmembrane region" description="Helical" evidence="1">
    <location>
        <begin position="215"/>
        <end position="235"/>
    </location>
</feature>
<feature type="transmembrane region" description="Helical" evidence="1">
    <location>
        <begin position="238"/>
        <end position="258"/>
    </location>
</feature>
<feature type="transmembrane region" description="Helical" evidence="1">
    <location>
        <begin position="275"/>
        <end position="295"/>
    </location>
</feature>
<name>COXX_BORPE</name>
<gene>
    <name evidence="1" type="primary">ctaB</name>
    <name type="ordered locus">BP3735</name>
</gene>
<evidence type="ECO:0000255" key="1">
    <source>
        <dbReference type="HAMAP-Rule" id="MF_00154"/>
    </source>
</evidence>